<comment type="function">
    <text evidence="1">Allows the formation of correctly charged Gln-tRNA(Gln) through the transamidation of misacylated Glu-tRNA(Gln) in organisms which lack glutaminyl-tRNA synthetase. The reaction takes place in the presence of glutamine and ATP through an activated gamma-phospho-Glu-tRNA(Gln) (By similarity).</text>
</comment>
<comment type="catalytic activity">
    <reaction>
        <text>L-glutamyl-tRNA(Gln) + L-glutamine + ATP + H2O = L-glutaminyl-tRNA(Gln) + L-glutamate + ADP + phosphate + H(+)</text>
        <dbReference type="Rhea" id="RHEA:17521"/>
        <dbReference type="Rhea" id="RHEA-COMP:9681"/>
        <dbReference type="Rhea" id="RHEA-COMP:9684"/>
        <dbReference type="ChEBI" id="CHEBI:15377"/>
        <dbReference type="ChEBI" id="CHEBI:15378"/>
        <dbReference type="ChEBI" id="CHEBI:29985"/>
        <dbReference type="ChEBI" id="CHEBI:30616"/>
        <dbReference type="ChEBI" id="CHEBI:43474"/>
        <dbReference type="ChEBI" id="CHEBI:58359"/>
        <dbReference type="ChEBI" id="CHEBI:78520"/>
        <dbReference type="ChEBI" id="CHEBI:78521"/>
        <dbReference type="ChEBI" id="CHEBI:456216"/>
        <dbReference type="EC" id="6.3.5.7"/>
    </reaction>
</comment>
<comment type="subunit">
    <text evidence="1">Heterotrimer of A, B and C subunits.</text>
</comment>
<comment type="similarity">
    <text evidence="2">Belongs to the amidase family. GatA subfamily.</text>
</comment>
<protein>
    <recommendedName>
        <fullName>Glutamyl-tRNA(Gln) amidotransferase subunit A</fullName>
        <shortName>Glu-ADT subunit A</shortName>
        <ecNumber>6.3.5.7</ecNumber>
    </recommendedName>
</protein>
<keyword id="KW-0002">3D-structure</keyword>
<keyword id="KW-0067">ATP-binding</keyword>
<keyword id="KW-0436">Ligase</keyword>
<keyword id="KW-0547">Nucleotide-binding</keyword>
<keyword id="KW-0648">Protein biosynthesis</keyword>
<keyword id="KW-1185">Reference proteome</keyword>
<name>GATA_THEMA</name>
<sequence>MIDLDFRKLTIEECLKLSEEEREKLPQLSLETIKRLDPHVKAFISVRENVSVEKKGKFWGIPVAIKDNILTLGMRTTCASRILENYESVFDATVVKKMKEAGFVVVGKANLDEFAMGSSTERSAFFPTRNPWDLERVPGGSSGGSAAAVSAGMVVAALGSDTGGSVRQPASLCGVVGYKPTYGLVSRYGLVAFASSLDQIGPITKTVRDAAILMEIISGRDENDATTVNRKVDFLSEIEEGVSGMKFAVPEEIYEHDIEEGVSERFEEALKLLERLGAKVERVKIPHIKYSVATYYVIAPAEASSNLARFDGVKYGLRIKEKGLREMYMKTRNVGFGEEVRRRIMIGTFTLSAAYYEAYFNKAMKVRRKISDELNEVLSQYDAILTPTSPVTAFKIGEIKDPLTYYLMDIFTIPANLAGLPAISVPFGFSNNLPVGVQVIGRRFADGKVFRIARAIEKNSPYNENGMFPLPEVKA</sequence>
<evidence type="ECO:0000250" key="1"/>
<evidence type="ECO:0000305" key="2"/>
<evidence type="ECO:0007829" key="3">
    <source>
        <dbReference type="PDB" id="2GI3"/>
    </source>
</evidence>
<evidence type="ECO:0007829" key="4">
    <source>
        <dbReference type="PDB" id="3AL0"/>
    </source>
</evidence>
<feature type="chain" id="PRO_0000105221" description="Glutamyl-tRNA(Gln) amidotransferase subunit A">
    <location>
        <begin position="1"/>
        <end position="475"/>
    </location>
</feature>
<feature type="active site" description="Charge relay system" evidence="1">
    <location>
        <position position="66"/>
    </location>
</feature>
<feature type="active site" description="Charge relay system" evidence="1">
    <location>
        <position position="141"/>
    </location>
</feature>
<feature type="active site" description="Acyl-ester intermediate" evidence="1">
    <location>
        <position position="165"/>
    </location>
</feature>
<feature type="helix" evidence="3">
    <location>
        <begin position="6"/>
        <end position="8"/>
    </location>
</feature>
<feature type="helix" evidence="3">
    <location>
        <begin position="11"/>
        <end position="14"/>
    </location>
</feature>
<feature type="helix" evidence="3">
    <location>
        <begin position="19"/>
        <end position="22"/>
    </location>
</feature>
<feature type="helix" evidence="3">
    <location>
        <begin position="25"/>
        <end position="40"/>
    </location>
</feature>
<feature type="strand" evidence="3">
    <location>
        <begin position="43"/>
        <end position="46"/>
    </location>
</feature>
<feature type="turn" evidence="3">
    <location>
        <begin position="57"/>
        <end position="60"/>
    </location>
</feature>
<feature type="strand" evidence="3">
    <location>
        <begin position="62"/>
        <end position="66"/>
    </location>
</feature>
<feature type="strand" evidence="3">
    <location>
        <begin position="72"/>
        <end position="74"/>
    </location>
</feature>
<feature type="helix" evidence="3">
    <location>
        <begin position="81"/>
        <end position="83"/>
    </location>
</feature>
<feature type="helix" evidence="3">
    <location>
        <begin position="93"/>
        <end position="101"/>
    </location>
</feature>
<feature type="strand" evidence="3">
    <location>
        <begin position="104"/>
        <end position="109"/>
    </location>
</feature>
<feature type="helix" evidence="3">
    <location>
        <begin position="113"/>
        <end position="115"/>
    </location>
</feature>
<feature type="strand" evidence="3">
    <location>
        <begin position="118"/>
        <end position="120"/>
    </location>
</feature>
<feature type="strand" evidence="3">
    <location>
        <begin position="140"/>
        <end position="142"/>
    </location>
</feature>
<feature type="helix" evidence="3">
    <location>
        <begin position="143"/>
        <end position="150"/>
    </location>
</feature>
<feature type="strand" evidence="3">
    <location>
        <begin position="153"/>
        <end position="164"/>
    </location>
</feature>
<feature type="helix" evidence="3">
    <location>
        <begin position="167"/>
        <end position="173"/>
    </location>
</feature>
<feature type="strand" evidence="3">
    <location>
        <begin position="175"/>
        <end position="179"/>
    </location>
</feature>
<feature type="turn" evidence="3">
    <location>
        <begin position="195"/>
        <end position="197"/>
    </location>
</feature>
<feature type="strand" evidence="3">
    <location>
        <begin position="199"/>
        <end position="206"/>
    </location>
</feature>
<feature type="helix" evidence="3">
    <location>
        <begin position="207"/>
        <end position="217"/>
    </location>
</feature>
<feature type="turn" evidence="3">
    <location>
        <begin position="236"/>
        <end position="239"/>
    </location>
</feature>
<feature type="strand" evidence="3">
    <location>
        <begin position="246"/>
        <end position="250"/>
    </location>
</feature>
<feature type="helix" evidence="3">
    <location>
        <begin position="251"/>
        <end position="255"/>
    </location>
</feature>
<feature type="helix" evidence="3">
    <location>
        <begin position="260"/>
        <end position="275"/>
    </location>
</feature>
<feature type="strand" evidence="3">
    <location>
        <begin position="279"/>
        <end position="283"/>
    </location>
</feature>
<feature type="helix" evidence="3">
    <location>
        <begin position="288"/>
        <end position="290"/>
    </location>
</feature>
<feature type="helix" evidence="3">
    <location>
        <begin position="291"/>
        <end position="304"/>
    </location>
</feature>
<feature type="strand" evidence="4">
    <location>
        <begin position="311"/>
        <end position="316"/>
    </location>
</feature>
<feature type="helix" evidence="4">
    <location>
        <begin position="324"/>
        <end position="335"/>
    </location>
</feature>
<feature type="helix" evidence="3">
    <location>
        <begin position="336"/>
        <end position="380"/>
    </location>
</feature>
<feature type="strand" evidence="3">
    <location>
        <begin position="381"/>
        <end position="388"/>
    </location>
</feature>
<feature type="strand" evidence="4">
    <location>
        <begin position="390"/>
        <end position="392"/>
    </location>
</feature>
<feature type="turn" evidence="3">
    <location>
        <begin position="396"/>
        <end position="398"/>
    </location>
</feature>
<feature type="helix" evidence="3">
    <location>
        <begin position="402"/>
        <end position="406"/>
    </location>
</feature>
<feature type="turn" evidence="3">
    <location>
        <begin position="407"/>
        <end position="412"/>
    </location>
</feature>
<feature type="helix" evidence="3">
    <location>
        <begin position="413"/>
        <end position="418"/>
    </location>
</feature>
<feature type="strand" evidence="3">
    <location>
        <begin position="422"/>
        <end position="430"/>
    </location>
</feature>
<feature type="strand" evidence="3">
    <location>
        <begin position="433"/>
        <end position="440"/>
    </location>
</feature>
<feature type="helix" evidence="3">
    <location>
        <begin position="446"/>
        <end position="459"/>
    </location>
</feature>
<gene>
    <name type="primary">gatA</name>
    <name type="ordered locus">TM_1272</name>
</gene>
<accession>Q9X0Z9</accession>
<reference key="1">
    <citation type="journal article" date="1999" name="Nature">
        <title>Evidence for lateral gene transfer between Archaea and Bacteria from genome sequence of Thermotoga maritima.</title>
        <authorList>
            <person name="Nelson K.E."/>
            <person name="Clayton R.A."/>
            <person name="Gill S.R."/>
            <person name="Gwinn M.L."/>
            <person name="Dodson R.J."/>
            <person name="Haft D.H."/>
            <person name="Hickey E.K."/>
            <person name="Peterson J.D."/>
            <person name="Nelson W.C."/>
            <person name="Ketchum K.A."/>
            <person name="McDonald L.A."/>
            <person name="Utterback T.R."/>
            <person name="Malek J.A."/>
            <person name="Linher K.D."/>
            <person name="Garrett M.M."/>
            <person name="Stewart A.M."/>
            <person name="Cotton M.D."/>
            <person name="Pratt M.S."/>
            <person name="Phillips C.A."/>
            <person name="Richardson D.L."/>
            <person name="Heidelberg J.F."/>
            <person name="Sutton G.G."/>
            <person name="Fleischmann R.D."/>
            <person name="Eisen J.A."/>
            <person name="White O."/>
            <person name="Salzberg S.L."/>
            <person name="Smith H.O."/>
            <person name="Venter J.C."/>
            <person name="Fraser C.M."/>
        </authorList>
    </citation>
    <scope>NUCLEOTIDE SEQUENCE [LARGE SCALE GENOMIC DNA]</scope>
    <source>
        <strain>ATCC 43589 / DSM 3109 / JCM 10099 / NBRC 100826 / MSB8</strain>
    </source>
</reference>
<proteinExistence type="evidence at protein level"/>
<organism>
    <name type="scientific">Thermotoga maritima (strain ATCC 43589 / DSM 3109 / JCM 10099 / NBRC 100826 / MSB8)</name>
    <dbReference type="NCBI Taxonomy" id="243274"/>
    <lineage>
        <taxon>Bacteria</taxon>
        <taxon>Thermotogati</taxon>
        <taxon>Thermotogota</taxon>
        <taxon>Thermotogae</taxon>
        <taxon>Thermotogales</taxon>
        <taxon>Thermotogaceae</taxon>
        <taxon>Thermotoga</taxon>
    </lineage>
</organism>
<dbReference type="EC" id="6.3.5.7"/>
<dbReference type="EMBL" id="AE000512">
    <property type="protein sequence ID" value="AAD36347.1"/>
    <property type="molecule type" value="Genomic_DNA"/>
</dbReference>
<dbReference type="PIR" id="G72274">
    <property type="entry name" value="G72274"/>
</dbReference>
<dbReference type="RefSeq" id="NP_229077.1">
    <property type="nucleotide sequence ID" value="NC_000853.1"/>
</dbReference>
<dbReference type="PDB" id="2GI3">
    <property type="method" value="X-ray"/>
    <property type="resolution" value="1.80 A"/>
    <property type="chains" value="A=1-475"/>
</dbReference>
<dbReference type="PDB" id="3AL0">
    <property type="method" value="X-ray"/>
    <property type="resolution" value="3.37 A"/>
    <property type="chains" value="A=1-475"/>
</dbReference>
<dbReference type="PDBsum" id="2GI3"/>
<dbReference type="PDBsum" id="3AL0"/>
<dbReference type="SMR" id="Q9X0Z9"/>
<dbReference type="DIP" id="DIP-59228N"/>
<dbReference type="FunCoup" id="Q9X0Z9">
    <property type="interactions" value="378"/>
</dbReference>
<dbReference type="IntAct" id="Q9X0Z9">
    <property type="interactions" value="3"/>
</dbReference>
<dbReference type="STRING" id="243274.TM_1272"/>
<dbReference type="PaxDb" id="243274-THEMA_07975"/>
<dbReference type="EnsemblBacteria" id="AAD36347">
    <property type="protein sequence ID" value="AAD36347"/>
    <property type="gene ID" value="TM_1272"/>
</dbReference>
<dbReference type="KEGG" id="tma:TM1272"/>
<dbReference type="KEGG" id="tmi:THEMA_07975"/>
<dbReference type="PATRIC" id="fig|243274.18.peg.1542"/>
<dbReference type="eggNOG" id="COG0154">
    <property type="taxonomic scope" value="Bacteria"/>
</dbReference>
<dbReference type="InParanoid" id="Q9X0Z9"/>
<dbReference type="OrthoDB" id="9811471at2"/>
<dbReference type="BRENDA" id="6.3.5.7">
    <property type="organism ID" value="6331"/>
</dbReference>
<dbReference type="EvolutionaryTrace" id="Q9X0Z9"/>
<dbReference type="Proteomes" id="UP000008183">
    <property type="component" value="Chromosome"/>
</dbReference>
<dbReference type="GO" id="GO:0030956">
    <property type="term" value="C:glutamyl-tRNA(Gln) amidotransferase complex"/>
    <property type="evidence" value="ECO:0007669"/>
    <property type="project" value="InterPro"/>
</dbReference>
<dbReference type="GO" id="GO:0005524">
    <property type="term" value="F:ATP binding"/>
    <property type="evidence" value="ECO:0007669"/>
    <property type="project" value="UniProtKB-KW"/>
</dbReference>
<dbReference type="GO" id="GO:0050567">
    <property type="term" value="F:glutaminyl-tRNA synthase (glutamine-hydrolyzing) activity"/>
    <property type="evidence" value="ECO:0007669"/>
    <property type="project" value="UniProtKB-UniRule"/>
</dbReference>
<dbReference type="GO" id="GO:0006412">
    <property type="term" value="P:translation"/>
    <property type="evidence" value="ECO:0007669"/>
    <property type="project" value="UniProtKB-UniRule"/>
</dbReference>
<dbReference type="Gene3D" id="3.90.1300.10">
    <property type="entry name" value="Amidase signature (AS) domain"/>
    <property type="match status" value="1"/>
</dbReference>
<dbReference type="HAMAP" id="MF_00120">
    <property type="entry name" value="GatA"/>
    <property type="match status" value="1"/>
</dbReference>
<dbReference type="InterPro" id="IPR000120">
    <property type="entry name" value="Amidase"/>
</dbReference>
<dbReference type="InterPro" id="IPR020556">
    <property type="entry name" value="Amidase_CS"/>
</dbReference>
<dbReference type="InterPro" id="IPR023631">
    <property type="entry name" value="Amidase_dom"/>
</dbReference>
<dbReference type="InterPro" id="IPR036928">
    <property type="entry name" value="AS_sf"/>
</dbReference>
<dbReference type="InterPro" id="IPR004412">
    <property type="entry name" value="GatA"/>
</dbReference>
<dbReference type="NCBIfam" id="TIGR00132">
    <property type="entry name" value="gatA"/>
    <property type="match status" value="1"/>
</dbReference>
<dbReference type="PANTHER" id="PTHR11895:SF151">
    <property type="entry name" value="GLUTAMYL-TRNA(GLN) AMIDOTRANSFERASE SUBUNIT A"/>
    <property type="match status" value="1"/>
</dbReference>
<dbReference type="PANTHER" id="PTHR11895">
    <property type="entry name" value="TRANSAMIDASE"/>
    <property type="match status" value="1"/>
</dbReference>
<dbReference type="Pfam" id="PF01425">
    <property type="entry name" value="Amidase"/>
    <property type="match status" value="1"/>
</dbReference>
<dbReference type="SUPFAM" id="SSF75304">
    <property type="entry name" value="Amidase signature (AS) enzymes"/>
    <property type="match status" value="1"/>
</dbReference>
<dbReference type="PROSITE" id="PS00571">
    <property type="entry name" value="AMIDASES"/>
    <property type="match status" value="1"/>
</dbReference>